<sequence length="245" mass="27208">MSQSTSVLRRNGFTFKQFFVAHDRCAMKVGTDGILLGAWAPVAGVKRCLDIGAGSGLLALMLAQRTSDSVIIDAVELESEAAAQAQENINQSPWAERINVHTADIQQWITQQTVRFDLIISNPPYYQQGVECATPQREQARYTTTLDHPSLLTCAAECITEEGFFCVVLPEQIGNGFTELALSMGWHLRLRTDVAENEARLPHRVLLAFSPQAGECFSDRLVIRGPDQNYSEAYTALTQAFYLFM</sequence>
<dbReference type="EC" id="2.1.1.223" evidence="1"/>
<dbReference type="EMBL" id="AP009240">
    <property type="protein sequence ID" value="BAG78387.1"/>
    <property type="molecule type" value="Genomic_DNA"/>
</dbReference>
<dbReference type="SMR" id="B6I5E9"/>
<dbReference type="KEGG" id="ecy:ECSE_2863"/>
<dbReference type="HOGENOM" id="CLU_061983_0_0_6"/>
<dbReference type="Proteomes" id="UP000008199">
    <property type="component" value="Chromosome"/>
</dbReference>
<dbReference type="GO" id="GO:0005737">
    <property type="term" value="C:cytoplasm"/>
    <property type="evidence" value="ECO:0007669"/>
    <property type="project" value="UniProtKB-SubCell"/>
</dbReference>
<dbReference type="GO" id="GO:0003676">
    <property type="term" value="F:nucleic acid binding"/>
    <property type="evidence" value="ECO:0007669"/>
    <property type="project" value="InterPro"/>
</dbReference>
<dbReference type="GO" id="GO:0016430">
    <property type="term" value="F:tRNA (adenine-N6)-methyltransferase activity"/>
    <property type="evidence" value="ECO:0007669"/>
    <property type="project" value="UniProtKB-UniRule"/>
</dbReference>
<dbReference type="GO" id="GO:0032259">
    <property type="term" value="P:methylation"/>
    <property type="evidence" value="ECO:0007669"/>
    <property type="project" value="UniProtKB-KW"/>
</dbReference>
<dbReference type="GO" id="GO:0008033">
    <property type="term" value="P:tRNA processing"/>
    <property type="evidence" value="ECO:0007669"/>
    <property type="project" value="UniProtKB-UniRule"/>
</dbReference>
<dbReference type="CDD" id="cd02440">
    <property type="entry name" value="AdoMet_MTases"/>
    <property type="match status" value="1"/>
</dbReference>
<dbReference type="FunFam" id="3.40.50.150:FF:000087">
    <property type="entry name" value="tRNA1(Val) (adenine(37)-N6)-methyltransferase"/>
    <property type="match status" value="1"/>
</dbReference>
<dbReference type="Gene3D" id="3.40.50.150">
    <property type="entry name" value="Vaccinia Virus protein VP39"/>
    <property type="match status" value="1"/>
</dbReference>
<dbReference type="HAMAP" id="MF_01872">
    <property type="entry name" value="tRNA_methyltr_YfiC"/>
    <property type="match status" value="1"/>
</dbReference>
<dbReference type="InterPro" id="IPR002052">
    <property type="entry name" value="DNA_methylase_N6_adenine_CS"/>
</dbReference>
<dbReference type="InterPro" id="IPR029063">
    <property type="entry name" value="SAM-dependent_MTases_sf"/>
</dbReference>
<dbReference type="InterPro" id="IPR007848">
    <property type="entry name" value="Small_mtfrase_dom"/>
</dbReference>
<dbReference type="InterPro" id="IPR050210">
    <property type="entry name" value="tRNA_Adenine-N(6)_MTase"/>
</dbReference>
<dbReference type="InterPro" id="IPR022882">
    <property type="entry name" value="tRNA_adenine-N6_MeTrfase"/>
</dbReference>
<dbReference type="NCBIfam" id="NF047853">
    <property type="entry name" value="tRm6a37MtseTrmN"/>
    <property type="match status" value="1"/>
</dbReference>
<dbReference type="PANTHER" id="PTHR47739">
    <property type="entry name" value="TRNA1(VAL) (ADENINE(37)-N6)-METHYLTRANSFERASE"/>
    <property type="match status" value="1"/>
</dbReference>
<dbReference type="PANTHER" id="PTHR47739:SF1">
    <property type="entry name" value="TRNA1(VAL) (ADENINE(37)-N6)-METHYLTRANSFERASE"/>
    <property type="match status" value="1"/>
</dbReference>
<dbReference type="Pfam" id="PF05175">
    <property type="entry name" value="MTS"/>
    <property type="match status" value="1"/>
</dbReference>
<dbReference type="SUPFAM" id="SSF53335">
    <property type="entry name" value="S-adenosyl-L-methionine-dependent methyltransferases"/>
    <property type="match status" value="1"/>
</dbReference>
<dbReference type="PROSITE" id="PS00092">
    <property type="entry name" value="N6_MTASE"/>
    <property type="match status" value="1"/>
</dbReference>
<keyword id="KW-0963">Cytoplasm</keyword>
<keyword id="KW-0489">Methyltransferase</keyword>
<keyword id="KW-0949">S-adenosyl-L-methionine</keyword>
<keyword id="KW-0808">Transferase</keyword>
<keyword id="KW-0819">tRNA processing</keyword>
<organism>
    <name type="scientific">Escherichia coli (strain SE11)</name>
    <dbReference type="NCBI Taxonomy" id="409438"/>
    <lineage>
        <taxon>Bacteria</taxon>
        <taxon>Pseudomonadati</taxon>
        <taxon>Pseudomonadota</taxon>
        <taxon>Gammaproteobacteria</taxon>
        <taxon>Enterobacterales</taxon>
        <taxon>Enterobacteriaceae</taxon>
        <taxon>Escherichia</taxon>
    </lineage>
</organism>
<comment type="function">
    <text evidence="1">Specifically methylates the adenine in position 37 of tRNA(1)(Val) (anticodon cmo5UAC).</text>
</comment>
<comment type="catalytic activity">
    <reaction evidence="1">
        <text>adenosine(37) in tRNA1(Val) + S-adenosyl-L-methionine = N(6)-methyladenosine(37) in tRNA1(Val) + S-adenosyl-L-homocysteine + H(+)</text>
        <dbReference type="Rhea" id="RHEA:43160"/>
        <dbReference type="Rhea" id="RHEA-COMP:10369"/>
        <dbReference type="Rhea" id="RHEA-COMP:10370"/>
        <dbReference type="ChEBI" id="CHEBI:15378"/>
        <dbReference type="ChEBI" id="CHEBI:57856"/>
        <dbReference type="ChEBI" id="CHEBI:59789"/>
        <dbReference type="ChEBI" id="CHEBI:74411"/>
        <dbReference type="ChEBI" id="CHEBI:74449"/>
        <dbReference type="EC" id="2.1.1.223"/>
    </reaction>
</comment>
<comment type="subcellular location">
    <subcellularLocation>
        <location evidence="1">Cytoplasm</location>
    </subcellularLocation>
</comment>
<comment type="similarity">
    <text evidence="1">Belongs to the methyltransferase superfamily. tRNA (adenine-N(6)-)-methyltransferase family.</text>
</comment>
<proteinExistence type="inferred from homology"/>
<accession>B6I5E9</accession>
<gene>
    <name evidence="1" type="primary">yfiC</name>
    <name type="ordered locus">ECSE_2863</name>
</gene>
<protein>
    <recommendedName>
        <fullName evidence="1">tRNA1(Val) (adenine(37)-N6)-methyltransferase</fullName>
        <ecNumber evidence="1">2.1.1.223</ecNumber>
    </recommendedName>
    <alternativeName>
        <fullName evidence="1">tRNA m6A37 methyltransferase</fullName>
    </alternativeName>
</protein>
<reference key="1">
    <citation type="journal article" date="2008" name="DNA Res.">
        <title>Complete genome sequence and comparative analysis of the wild-type commensal Escherichia coli strain SE11 isolated from a healthy adult.</title>
        <authorList>
            <person name="Oshima K."/>
            <person name="Toh H."/>
            <person name="Ogura Y."/>
            <person name="Sasamoto H."/>
            <person name="Morita H."/>
            <person name="Park S.-H."/>
            <person name="Ooka T."/>
            <person name="Iyoda S."/>
            <person name="Taylor T.D."/>
            <person name="Hayashi T."/>
            <person name="Itoh K."/>
            <person name="Hattori M."/>
        </authorList>
    </citation>
    <scope>NUCLEOTIDE SEQUENCE [LARGE SCALE GENOMIC DNA]</scope>
    <source>
        <strain>SE11</strain>
    </source>
</reference>
<evidence type="ECO:0000255" key="1">
    <source>
        <dbReference type="HAMAP-Rule" id="MF_01872"/>
    </source>
</evidence>
<name>TRMN6_ECOSE</name>
<feature type="chain" id="PRO_0000387361" description="tRNA1(Val) (adenine(37)-N6)-methyltransferase">
    <location>
        <begin position="1"/>
        <end position="245"/>
    </location>
</feature>